<comment type="similarity">
    <text evidence="1">Belongs to the bacterial ribosomal protein bL32 family.</text>
</comment>
<protein>
    <recommendedName>
        <fullName evidence="1">Large ribosomal subunit protein bL32</fullName>
    </recommendedName>
    <alternativeName>
        <fullName evidence="2">50S ribosomal protein L32</fullName>
    </alternativeName>
</protein>
<feature type="chain" id="PRO_0000296511" description="Large ribosomal subunit protein bL32">
    <location>
        <begin position="1"/>
        <end position="59"/>
    </location>
</feature>
<gene>
    <name evidence="1" type="primary">rpmF</name>
    <name type="ordered locus">MCAP_0386</name>
</gene>
<keyword id="KW-0687">Ribonucleoprotein</keyword>
<keyword id="KW-0689">Ribosomal protein</keyword>
<sequence length="59" mass="6492">MAVPFRKTSKSAKNKRRSHLALSAASLVSCTNCGAMIKPHHVCKECGFYKNKEVKVVEA</sequence>
<accession>Q2SS97</accession>
<proteinExistence type="inferred from homology"/>
<dbReference type="EMBL" id="CP000123">
    <property type="protein sequence ID" value="ABC01215.1"/>
    <property type="molecule type" value="Genomic_DNA"/>
</dbReference>
<dbReference type="RefSeq" id="WP_008362864.1">
    <property type="nucleotide sequence ID" value="NC_007633.1"/>
</dbReference>
<dbReference type="SMR" id="Q2SS97"/>
<dbReference type="GeneID" id="90597933"/>
<dbReference type="KEGG" id="mcp:MCAP_0386"/>
<dbReference type="HOGENOM" id="CLU_129084_1_3_14"/>
<dbReference type="PhylomeDB" id="Q2SS97"/>
<dbReference type="Proteomes" id="UP000001928">
    <property type="component" value="Chromosome"/>
</dbReference>
<dbReference type="GO" id="GO:0015934">
    <property type="term" value="C:large ribosomal subunit"/>
    <property type="evidence" value="ECO:0007669"/>
    <property type="project" value="InterPro"/>
</dbReference>
<dbReference type="GO" id="GO:0003735">
    <property type="term" value="F:structural constituent of ribosome"/>
    <property type="evidence" value="ECO:0007669"/>
    <property type="project" value="InterPro"/>
</dbReference>
<dbReference type="GO" id="GO:0006412">
    <property type="term" value="P:translation"/>
    <property type="evidence" value="ECO:0007669"/>
    <property type="project" value="UniProtKB-UniRule"/>
</dbReference>
<dbReference type="Gene3D" id="1.20.5.640">
    <property type="entry name" value="Single helix bin"/>
    <property type="match status" value="1"/>
</dbReference>
<dbReference type="HAMAP" id="MF_00340">
    <property type="entry name" value="Ribosomal_bL32"/>
    <property type="match status" value="1"/>
</dbReference>
<dbReference type="InterPro" id="IPR002677">
    <property type="entry name" value="Ribosomal_bL32"/>
</dbReference>
<dbReference type="InterPro" id="IPR044957">
    <property type="entry name" value="Ribosomal_bL32_bact"/>
</dbReference>
<dbReference type="InterPro" id="IPR011332">
    <property type="entry name" value="Ribosomal_zn-bd"/>
</dbReference>
<dbReference type="NCBIfam" id="TIGR01031">
    <property type="entry name" value="rpmF_bact"/>
    <property type="match status" value="1"/>
</dbReference>
<dbReference type="PANTHER" id="PTHR35534">
    <property type="entry name" value="50S RIBOSOMAL PROTEIN L32"/>
    <property type="match status" value="1"/>
</dbReference>
<dbReference type="PANTHER" id="PTHR35534:SF2">
    <property type="entry name" value="LARGE RIBOSOMAL SUBUNIT PROTEIN BL32"/>
    <property type="match status" value="1"/>
</dbReference>
<dbReference type="Pfam" id="PF01783">
    <property type="entry name" value="Ribosomal_L32p"/>
    <property type="match status" value="1"/>
</dbReference>
<dbReference type="SUPFAM" id="SSF57829">
    <property type="entry name" value="Zn-binding ribosomal proteins"/>
    <property type="match status" value="1"/>
</dbReference>
<evidence type="ECO:0000255" key="1">
    <source>
        <dbReference type="HAMAP-Rule" id="MF_00340"/>
    </source>
</evidence>
<evidence type="ECO:0000305" key="2"/>
<name>RL32_MYCCT</name>
<reference key="1">
    <citation type="submission" date="2005-09" db="EMBL/GenBank/DDBJ databases">
        <authorList>
            <person name="Glass J.I."/>
            <person name="Lartigue C."/>
            <person name="Pfannkoch C."/>
            <person name="Baden-Tillson H."/>
            <person name="Smith H.O."/>
            <person name="Venter J.C."/>
            <person name="Roske K."/>
            <person name="Wise K.S."/>
            <person name="Calcutt M.J."/>
            <person name="Nelson W.C."/>
            <person name="Nierman W.C."/>
        </authorList>
    </citation>
    <scope>NUCLEOTIDE SEQUENCE [LARGE SCALE GENOMIC DNA]</scope>
    <source>
        <strain>California kid / ATCC 27343 / NCTC 10154</strain>
    </source>
</reference>
<organism>
    <name type="scientific">Mycoplasma capricolum subsp. capricolum (strain California kid / ATCC 27343 / NCTC 10154)</name>
    <dbReference type="NCBI Taxonomy" id="340047"/>
    <lineage>
        <taxon>Bacteria</taxon>
        <taxon>Bacillati</taxon>
        <taxon>Mycoplasmatota</taxon>
        <taxon>Mollicutes</taxon>
        <taxon>Mycoplasmataceae</taxon>
        <taxon>Mycoplasma</taxon>
    </lineage>
</organism>